<accession>A7FZ53</accession>
<proteinExistence type="inferred from homology"/>
<evidence type="ECO:0000255" key="1">
    <source>
        <dbReference type="HAMAP-Rule" id="MF_01337"/>
    </source>
</evidence>
<evidence type="ECO:0000305" key="2"/>
<dbReference type="EMBL" id="CP000726">
    <property type="protein sequence ID" value="ABS35788.1"/>
    <property type="molecule type" value="Genomic_DNA"/>
</dbReference>
<dbReference type="RefSeq" id="WP_003357434.1">
    <property type="nucleotide sequence ID" value="NC_009697.1"/>
</dbReference>
<dbReference type="SMR" id="A7FZ53"/>
<dbReference type="GeneID" id="5187725"/>
<dbReference type="KEGG" id="cba:CLB_3521"/>
<dbReference type="HOGENOM" id="CLU_098841_0_1_9"/>
<dbReference type="GO" id="GO:0022625">
    <property type="term" value="C:cytosolic large ribosomal subunit"/>
    <property type="evidence" value="ECO:0007669"/>
    <property type="project" value="TreeGrafter"/>
</dbReference>
<dbReference type="GO" id="GO:0008097">
    <property type="term" value="F:5S rRNA binding"/>
    <property type="evidence" value="ECO:0007669"/>
    <property type="project" value="TreeGrafter"/>
</dbReference>
<dbReference type="GO" id="GO:0003735">
    <property type="term" value="F:structural constituent of ribosome"/>
    <property type="evidence" value="ECO:0007669"/>
    <property type="project" value="InterPro"/>
</dbReference>
<dbReference type="GO" id="GO:0006412">
    <property type="term" value="P:translation"/>
    <property type="evidence" value="ECO:0007669"/>
    <property type="project" value="UniProtKB-UniRule"/>
</dbReference>
<dbReference type="CDD" id="cd00432">
    <property type="entry name" value="Ribosomal_L18_L5e"/>
    <property type="match status" value="1"/>
</dbReference>
<dbReference type="FunFam" id="3.30.420.100:FF:000001">
    <property type="entry name" value="50S ribosomal protein L18"/>
    <property type="match status" value="1"/>
</dbReference>
<dbReference type="Gene3D" id="3.30.420.100">
    <property type="match status" value="1"/>
</dbReference>
<dbReference type="HAMAP" id="MF_01337_B">
    <property type="entry name" value="Ribosomal_uL18_B"/>
    <property type="match status" value="1"/>
</dbReference>
<dbReference type="InterPro" id="IPR004389">
    <property type="entry name" value="Ribosomal_uL18_bac-type"/>
</dbReference>
<dbReference type="InterPro" id="IPR005484">
    <property type="entry name" value="Ribosomal_uL18_bac/euk"/>
</dbReference>
<dbReference type="NCBIfam" id="TIGR00060">
    <property type="entry name" value="L18_bact"/>
    <property type="match status" value="1"/>
</dbReference>
<dbReference type="PANTHER" id="PTHR12899">
    <property type="entry name" value="39S RIBOSOMAL PROTEIN L18, MITOCHONDRIAL"/>
    <property type="match status" value="1"/>
</dbReference>
<dbReference type="PANTHER" id="PTHR12899:SF3">
    <property type="entry name" value="LARGE RIBOSOMAL SUBUNIT PROTEIN UL18M"/>
    <property type="match status" value="1"/>
</dbReference>
<dbReference type="Pfam" id="PF00861">
    <property type="entry name" value="Ribosomal_L18p"/>
    <property type="match status" value="1"/>
</dbReference>
<dbReference type="SUPFAM" id="SSF53137">
    <property type="entry name" value="Translational machinery components"/>
    <property type="match status" value="1"/>
</dbReference>
<name>RL18_CLOB1</name>
<comment type="function">
    <text evidence="1">This is one of the proteins that bind and probably mediate the attachment of the 5S RNA into the large ribosomal subunit, where it forms part of the central protuberance.</text>
</comment>
<comment type="subunit">
    <text evidence="1">Part of the 50S ribosomal subunit; part of the 5S rRNA/L5/L18/L25 subcomplex. Contacts the 5S and 23S rRNAs.</text>
</comment>
<comment type="similarity">
    <text evidence="1">Belongs to the universal ribosomal protein uL18 family.</text>
</comment>
<sequence length="119" mass="13371">MFKKNDRSQSRTRRHMRVRKKIFGTAERPRLSVYRSEKHIYAQLIDDVEGKTLVAASSSEKGFDGVGSNKEGAKLVGKMVAEKALEKGLKKVVFDRGGFIYHGRIKELAEGAREAGLDF</sequence>
<keyword id="KW-0687">Ribonucleoprotein</keyword>
<keyword id="KW-0689">Ribosomal protein</keyword>
<keyword id="KW-0694">RNA-binding</keyword>
<keyword id="KW-0699">rRNA-binding</keyword>
<reference key="1">
    <citation type="journal article" date="2007" name="PLoS ONE">
        <title>Analysis of the neurotoxin complex genes in Clostridium botulinum A1-A4 and B1 strains: BoNT/A3, /Ba4 and /B1 clusters are located within plasmids.</title>
        <authorList>
            <person name="Smith T.J."/>
            <person name="Hill K.K."/>
            <person name="Foley B.T."/>
            <person name="Detter J.C."/>
            <person name="Munk A.C."/>
            <person name="Bruce D.C."/>
            <person name="Doggett N.A."/>
            <person name="Smith L.A."/>
            <person name="Marks J.D."/>
            <person name="Xie G."/>
            <person name="Brettin T.S."/>
        </authorList>
    </citation>
    <scope>NUCLEOTIDE SEQUENCE [LARGE SCALE GENOMIC DNA]</scope>
    <source>
        <strain>ATCC 19397 / Type A</strain>
    </source>
</reference>
<feature type="chain" id="PRO_1000053012" description="Large ribosomal subunit protein uL18">
    <location>
        <begin position="1"/>
        <end position="119"/>
    </location>
</feature>
<protein>
    <recommendedName>
        <fullName evidence="1">Large ribosomal subunit protein uL18</fullName>
    </recommendedName>
    <alternativeName>
        <fullName evidence="2">50S ribosomal protein L18</fullName>
    </alternativeName>
</protein>
<gene>
    <name evidence="1" type="primary">rplR</name>
    <name type="ordered locus">CLB_3521</name>
</gene>
<organism>
    <name type="scientific">Clostridium botulinum (strain ATCC 19397 / Type A)</name>
    <dbReference type="NCBI Taxonomy" id="441770"/>
    <lineage>
        <taxon>Bacteria</taxon>
        <taxon>Bacillati</taxon>
        <taxon>Bacillota</taxon>
        <taxon>Clostridia</taxon>
        <taxon>Eubacteriales</taxon>
        <taxon>Clostridiaceae</taxon>
        <taxon>Clostridium</taxon>
    </lineage>
</organism>